<reference key="1">
    <citation type="journal article" date="2008" name="PLoS Genet.">
        <title>Complete genome sequence of the complex carbohydrate-degrading marine bacterium, Saccharophagus degradans strain 2-40 T.</title>
        <authorList>
            <person name="Weiner R.M."/>
            <person name="Taylor L.E. II"/>
            <person name="Henrissat B."/>
            <person name="Hauser L."/>
            <person name="Land M."/>
            <person name="Coutinho P.M."/>
            <person name="Rancurel C."/>
            <person name="Saunders E.H."/>
            <person name="Longmire A.G."/>
            <person name="Zhang H."/>
            <person name="Bayer E.A."/>
            <person name="Gilbert H.J."/>
            <person name="Larimer F."/>
            <person name="Zhulin I.B."/>
            <person name="Ekborg N.A."/>
            <person name="Lamed R."/>
            <person name="Richardson P.M."/>
            <person name="Borovok I."/>
            <person name="Hutcheson S."/>
        </authorList>
    </citation>
    <scope>NUCLEOTIDE SEQUENCE [LARGE SCALE GENOMIC DNA]</scope>
    <source>
        <strain>2-40 / ATCC 43961 / DSM 17024</strain>
    </source>
</reference>
<sequence>MRRQDFSYELPDELIARRPTETRTGSRLLMLDGPSGELAHKQFPDLLNLVEEGDLMVFNNTRVIPARVFGQKASGGKLEILAERILDAHSILAHVRSSKAPKPGSIIILQDGTEVEMVARHEALFELRFPADTTALDVLENIGHMPLPPYIDREDEADDKERYQTVYGTQKGAVAAPTAGLHFDDVLLAKLKDKGVQQAFVTLHVGAGTFQPVRVDNIFEHHMHSEVMHVSQEVCDLIKATKAAGKRVIAVGTTSVRCLETAAQNGVVEPYQGDTDIFIYPGYQYKVVDALVTNFHLPESTLLMLVSAFAGYKHTMNAYQQAVAQCYRFFSYGDAMFITHNAEACKEEIK</sequence>
<keyword id="KW-0963">Cytoplasm</keyword>
<keyword id="KW-0671">Queuosine biosynthesis</keyword>
<keyword id="KW-1185">Reference proteome</keyword>
<keyword id="KW-0949">S-adenosyl-L-methionine</keyword>
<keyword id="KW-0808">Transferase</keyword>
<gene>
    <name evidence="1" type="primary">queA</name>
    <name type="ordered locus">Sde_1405</name>
</gene>
<protein>
    <recommendedName>
        <fullName evidence="1">S-adenosylmethionine:tRNA ribosyltransferase-isomerase</fullName>
        <ecNumber evidence="1">2.4.99.17</ecNumber>
    </recommendedName>
    <alternativeName>
        <fullName evidence="1">Queuosine biosynthesis protein QueA</fullName>
    </alternativeName>
</protein>
<name>QUEA_SACD2</name>
<proteinExistence type="inferred from homology"/>
<dbReference type="EC" id="2.4.99.17" evidence="1"/>
<dbReference type="EMBL" id="CP000282">
    <property type="protein sequence ID" value="ABD80667.1"/>
    <property type="molecule type" value="Genomic_DNA"/>
</dbReference>
<dbReference type="RefSeq" id="WP_011467887.1">
    <property type="nucleotide sequence ID" value="NC_007912.1"/>
</dbReference>
<dbReference type="SMR" id="Q21KW2"/>
<dbReference type="STRING" id="203122.Sde_1405"/>
<dbReference type="GeneID" id="98613080"/>
<dbReference type="KEGG" id="sde:Sde_1405"/>
<dbReference type="eggNOG" id="COG0809">
    <property type="taxonomic scope" value="Bacteria"/>
</dbReference>
<dbReference type="HOGENOM" id="CLU_039110_1_0_6"/>
<dbReference type="OrthoDB" id="9805933at2"/>
<dbReference type="UniPathway" id="UPA00392"/>
<dbReference type="Proteomes" id="UP000001947">
    <property type="component" value="Chromosome"/>
</dbReference>
<dbReference type="GO" id="GO:0005737">
    <property type="term" value="C:cytoplasm"/>
    <property type="evidence" value="ECO:0007669"/>
    <property type="project" value="UniProtKB-SubCell"/>
</dbReference>
<dbReference type="GO" id="GO:0051075">
    <property type="term" value="F:S-adenosylmethionine:tRNA ribosyltransferase-isomerase activity"/>
    <property type="evidence" value="ECO:0007669"/>
    <property type="project" value="UniProtKB-EC"/>
</dbReference>
<dbReference type="GO" id="GO:0008616">
    <property type="term" value="P:queuosine biosynthetic process"/>
    <property type="evidence" value="ECO:0007669"/>
    <property type="project" value="UniProtKB-UniRule"/>
</dbReference>
<dbReference type="GO" id="GO:0002099">
    <property type="term" value="P:tRNA wobble guanine modification"/>
    <property type="evidence" value="ECO:0007669"/>
    <property type="project" value="TreeGrafter"/>
</dbReference>
<dbReference type="FunFam" id="2.40.10.240:FF:000001">
    <property type="entry name" value="S-adenosylmethionine:tRNA ribosyltransferase-isomerase"/>
    <property type="match status" value="1"/>
</dbReference>
<dbReference type="FunFam" id="3.40.1780.10:FF:000001">
    <property type="entry name" value="S-adenosylmethionine:tRNA ribosyltransferase-isomerase"/>
    <property type="match status" value="1"/>
</dbReference>
<dbReference type="Gene3D" id="2.40.10.240">
    <property type="entry name" value="QueA-like"/>
    <property type="match status" value="1"/>
</dbReference>
<dbReference type="Gene3D" id="3.40.1780.10">
    <property type="entry name" value="QueA-like"/>
    <property type="match status" value="1"/>
</dbReference>
<dbReference type="HAMAP" id="MF_00113">
    <property type="entry name" value="QueA"/>
    <property type="match status" value="1"/>
</dbReference>
<dbReference type="InterPro" id="IPR003699">
    <property type="entry name" value="QueA"/>
</dbReference>
<dbReference type="InterPro" id="IPR042118">
    <property type="entry name" value="QueA_dom1"/>
</dbReference>
<dbReference type="InterPro" id="IPR042119">
    <property type="entry name" value="QueA_dom2"/>
</dbReference>
<dbReference type="InterPro" id="IPR036100">
    <property type="entry name" value="QueA_sf"/>
</dbReference>
<dbReference type="NCBIfam" id="NF001140">
    <property type="entry name" value="PRK00147.1"/>
    <property type="match status" value="1"/>
</dbReference>
<dbReference type="NCBIfam" id="TIGR00113">
    <property type="entry name" value="queA"/>
    <property type="match status" value="1"/>
</dbReference>
<dbReference type="PANTHER" id="PTHR30307">
    <property type="entry name" value="S-ADENOSYLMETHIONINE:TRNA RIBOSYLTRANSFERASE-ISOMERASE"/>
    <property type="match status" value="1"/>
</dbReference>
<dbReference type="PANTHER" id="PTHR30307:SF0">
    <property type="entry name" value="S-ADENOSYLMETHIONINE:TRNA RIBOSYLTRANSFERASE-ISOMERASE"/>
    <property type="match status" value="1"/>
</dbReference>
<dbReference type="Pfam" id="PF02547">
    <property type="entry name" value="Queuosine_synth"/>
    <property type="match status" value="1"/>
</dbReference>
<dbReference type="SUPFAM" id="SSF111337">
    <property type="entry name" value="QueA-like"/>
    <property type="match status" value="1"/>
</dbReference>
<feature type="chain" id="PRO_1000015266" description="S-adenosylmethionine:tRNA ribosyltransferase-isomerase">
    <location>
        <begin position="1"/>
        <end position="350"/>
    </location>
</feature>
<organism>
    <name type="scientific">Saccharophagus degradans (strain 2-40 / ATCC 43961 / DSM 17024)</name>
    <dbReference type="NCBI Taxonomy" id="203122"/>
    <lineage>
        <taxon>Bacteria</taxon>
        <taxon>Pseudomonadati</taxon>
        <taxon>Pseudomonadota</taxon>
        <taxon>Gammaproteobacteria</taxon>
        <taxon>Cellvibrionales</taxon>
        <taxon>Cellvibrionaceae</taxon>
        <taxon>Saccharophagus</taxon>
    </lineage>
</organism>
<evidence type="ECO:0000255" key="1">
    <source>
        <dbReference type="HAMAP-Rule" id="MF_00113"/>
    </source>
</evidence>
<accession>Q21KW2</accession>
<comment type="function">
    <text evidence="1">Transfers and isomerizes the ribose moiety from AdoMet to the 7-aminomethyl group of 7-deazaguanine (preQ1-tRNA) to give epoxyqueuosine (oQ-tRNA).</text>
</comment>
<comment type="catalytic activity">
    <reaction evidence="1">
        <text>7-aminomethyl-7-carbaguanosine(34) in tRNA + S-adenosyl-L-methionine = epoxyqueuosine(34) in tRNA + adenine + L-methionine + 2 H(+)</text>
        <dbReference type="Rhea" id="RHEA:32155"/>
        <dbReference type="Rhea" id="RHEA-COMP:10342"/>
        <dbReference type="Rhea" id="RHEA-COMP:18582"/>
        <dbReference type="ChEBI" id="CHEBI:15378"/>
        <dbReference type="ChEBI" id="CHEBI:16708"/>
        <dbReference type="ChEBI" id="CHEBI:57844"/>
        <dbReference type="ChEBI" id="CHEBI:59789"/>
        <dbReference type="ChEBI" id="CHEBI:82833"/>
        <dbReference type="ChEBI" id="CHEBI:194443"/>
        <dbReference type="EC" id="2.4.99.17"/>
    </reaction>
</comment>
<comment type="pathway">
    <text evidence="1">tRNA modification; tRNA-queuosine biosynthesis.</text>
</comment>
<comment type="subunit">
    <text evidence="1">Monomer.</text>
</comment>
<comment type="subcellular location">
    <subcellularLocation>
        <location evidence="1">Cytoplasm</location>
    </subcellularLocation>
</comment>
<comment type="similarity">
    <text evidence="1">Belongs to the QueA family.</text>
</comment>